<gene>
    <name evidence="1" type="primary">gatC</name>
    <name type="ordered locus">Bphyt_0327</name>
</gene>
<keyword id="KW-0067">ATP-binding</keyword>
<keyword id="KW-0436">Ligase</keyword>
<keyword id="KW-0547">Nucleotide-binding</keyword>
<keyword id="KW-0648">Protein biosynthesis</keyword>
<protein>
    <recommendedName>
        <fullName evidence="1">Aspartyl/glutamyl-tRNA(Asn/Gln) amidotransferase subunit C</fullName>
        <shortName evidence="1">Asp/Glu-ADT subunit C</shortName>
        <ecNumber evidence="1">6.3.5.-</ecNumber>
    </recommendedName>
</protein>
<feature type="chain" id="PRO_1000095268" description="Aspartyl/glutamyl-tRNA(Asn/Gln) amidotransferase subunit C">
    <location>
        <begin position="1"/>
        <end position="99"/>
    </location>
</feature>
<name>GATC_PARPJ</name>
<reference key="1">
    <citation type="journal article" date="2011" name="J. Bacteriol.">
        <title>Complete genome sequence of the plant growth-promoting endophyte Burkholderia phytofirmans strain PsJN.</title>
        <authorList>
            <person name="Weilharter A."/>
            <person name="Mitter B."/>
            <person name="Shin M.V."/>
            <person name="Chain P.S."/>
            <person name="Nowak J."/>
            <person name="Sessitsch A."/>
        </authorList>
    </citation>
    <scope>NUCLEOTIDE SEQUENCE [LARGE SCALE GENOMIC DNA]</scope>
    <source>
        <strain>DSM 17436 / LMG 22146 / PsJN</strain>
    </source>
</reference>
<comment type="function">
    <text evidence="1">Allows the formation of correctly charged Asn-tRNA(Asn) or Gln-tRNA(Gln) through the transamidation of misacylated Asp-tRNA(Asn) or Glu-tRNA(Gln) in organisms which lack either or both of asparaginyl-tRNA or glutaminyl-tRNA synthetases. The reaction takes place in the presence of glutamine and ATP through an activated phospho-Asp-tRNA(Asn) or phospho-Glu-tRNA(Gln).</text>
</comment>
<comment type="catalytic activity">
    <reaction evidence="1">
        <text>L-glutamyl-tRNA(Gln) + L-glutamine + ATP + H2O = L-glutaminyl-tRNA(Gln) + L-glutamate + ADP + phosphate + H(+)</text>
        <dbReference type="Rhea" id="RHEA:17521"/>
        <dbReference type="Rhea" id="RHEA-COMP:9681"/>
        <dbReference type="Rhea" id="RHEA-COMP:9684"/>
        <dbReference type="ChEBI" id="CHEBI:15377"/>
        <dbReference type="ChEBI" id="CHEBI:15378"/>
        <dbReference type="ChEBI" id="CHEBI:29985"/>
        <dbReference type="ChEBI" id="CHEBI:30616"/>
        <dbReference type="ChEBI" id="CHEBI:43474"/>
        <dbReference type="ChEBI" id="CHEBI:58359"/>
        <dbReference type="ChEBI" id="CHEBI:78520"/>
        <dbReference type="ChEBI" id="CHEBI:78521"/>
        <dbReference type="ChEBI" id="CHEBI:456216"/>
    </reaction>
</comment>
<comment type="catalytic activity">
    <reaction evidence="1">
        <text>L-aspartyl-tRNA(Asn) + L-glutamine + ATP + H2O = L-asparaginyl-tRNA(Asn) + L-glutamate + ADP + phosphate + 2 H(+)</text>
        <dbReference type="Rhea" id="RHEA:14513"/>
        <dbReference type="Rhea" id="RHEA-COMP:9674"/>
        <dbReference type="Rhea" id="RHEA-COMP:9677"/>
        <dbReference type="ChEBI" id="CHEBI:15377"/>
        <dbReference type="ChEBI" id="CHEBI:15378"/>
        <dbReference type="ChEBI" id="CHEBI:29985"/>
        <dbReference type="ChEBI" id="CHEBI:30616"/>
        <dbReference type="ChEBI" id="CHEBI:43474"/>
        <dbReference type="ChEBI" id="CHEBI:58359"/>
        <dbReference type="ChEBI" id="CHEBI:78515"/>
        <dbReference type="ChEBI" id="CHEBI:78516"/>
        <dbReference type="ChEBI" id="CHEBI:456216"/>
    </reaction>
</comment>
<comment type="subunit">
    <text evidence="1">Heterotrimer of A, B and C subunits.</text>
</comment>
<comment type="similarity">
    <text evidence="1">Belongs to the GatC family.</text>
</comment>
<organism>
    <name type="scientific">Paraburkholderia phytofirmans (strain DSM 17436 / LMG 22146 / PsJN)</name>
    <name type="common">Burkholderia phytofirmans</name>
    <dbReference type="NCBI Taxonomy" id="398527"/>
    <lineage>
        <taxon>Bacteria</taxon>
        <taxon>Pseudomonadati</taxon>
        <taxon>Pseudomonadota</taxon>
        <taxon>Betaproteobacteria</taxon>
        <taxon>Burkholderiales</taxon>
        <taxon>Burkholderiaceae</taxon>
        <taxon>Paraburkholderia</taxon>
    </lineage>
</organism>
<proteinExistence type="inferred from homology"/>
<accession>B2T1M3</accession>
<evidence type="ECO:0000255" key="1">
    <source>
        <dbReference type="HAMAP-Rule" id="MF_00122"/>
    </source>
</evidence>
<dbReference type="EC" id="6.3.5.-" evidence="1"/>
<dbReference type="EMBL" id="CP001052">
    <property type="protein sequence ID" value="ACD14752.1"/>
    <property type="molecule type" value="Genomic_DNA"/>
</dbReference>
<dbReference type="RefSeq" id="WP_012431396.1">
    <property type="nucleotide sequence ID" value="NC_010681.1"/>
</dbReference>
<dbReference type="SMR" id="B2T1M3"/>
<dbReference type="STRING" id="398527.Bphyt_0327"/>
<dbReference type="KEGG" id="bpy:Bphyt_0327"/>
<dbReference type="eggNOG" id="COG0721">
    <property type="taxonomic scope" value="Bacteria"/>
</dbReference>
<dbReference type="HOGENOM" id="CLU_105899_2_2_4"/>
<dbReference type="OrthoDB" id="9794326at2"/>
<dbReference type="Proteomes" id="UP000001739">
    <property type="component" value="Chromosome 1"/>
</dbReference>
<dbReference type="GO" id="GO:0050566">
    <property type="term" value="F:asparaginyl-tRNA synthase (glutamine-hydrolyzing) activity"/>
    <property type="evidence" value="ECO:0007669"/>
    <property type="project" value="RHEA"/>
</dbReference>
<dbReference type="GO" id="GO:0005524">
    <property type="term" value="F:ATP binding"/>
    <property type="evidence" value="ECO:0007669"/>
    <property type="project" value="UniProtKB-KW"/>
</dbReference>
<dbReference type="GO" id="GO:0050567">
    <property type="term" value="F:glutaminyl-tRNA synthase (glutamine-hydrolyzing) activity"/>
    <property type="evidence" value="ECO:0007669"/>
    <property type="project" value="UniProtKB-UniRule"/>
</dbReference>
<dbReference type="GO" id="GO:0070681">
    <property type="term" value="P:glutaminyl-tRNAGln biosynthesis via transamidation"/>
    <property type="evidence" value="ECO:0007669"/>
    <property type="project" value="TreeGrafter"/>
</dbReference>
<dbReference type="GO" id="GO:0006450">
    <property type="term" value="P:regulation of translational fidelity"/>
    <property type="evidence" value="ECO:0007669"/>
    <property type="project" value="InterPro"/>
</dbReference>
<dbReference type="GO" id="GO:0006412">
    <property type="term" value="P:translation"/>
    <property type="evidence" value="ECO:0007669"/>
    <property type="project" value="UniProtKB-UniRule"/>
</dbReference>
<dbReference type="Gene3D" id="1.10.20.60">
    <property type="entry name" value="Glu-tRNAGln amidotransferase C subunit, N-terminal domain"/>
    <property type="match status" value="1"/>
</dbReference>
<dbReference type="HAMAP" id="MF_00122">
    <property type="entry name" value="GatC"/>
    <property type="match status" value="1"/>
</dbReference>
<dbReference type="InterPro" id="IPR036113">
    <property type="entry name" value="Asp/Glu-ADT_sf_sub_c"/>
</dbReference>
<dbReference type="InterPro" id="IPR003837">
    <property type="entry name" value="GatC"/>
</dbReference>
<dbReference type="NCBIfam" id="TIGR00135">
    <property type="entry name" value="gatC"/>
    <property type="match status" value="1"/>
</dbReference>
<dbReference type="PANTHER" id="PTHR15004">
    <property type="entry name" value="GLUTAMYL-TRNA(GLN) AMIDOTRANSFERASE SUBUNIT C, MITOCHONDRIAL"/>
    <property type="match status" value="1"/>
</dbReference>
<dbReference type="PANTHER" id="PTHR15004:SF0">
    <property type="entry name" value="GLUTAMYL-TRNA(GLN) AMIDOTRANSFERASE SUBUNIT C, MITOCHONDRIAL"/>
    <property type="match status" value="1"/>
</dbReference>
<dbReference type="Pfam" id="PF02686">
    <property type="entry name" value="GatC"/>
    <property type="match status" value="1"/>
</dbReference>
<dbReference type="SUPFAM" id="SSF141000">
    <property type="entry name" value="Glu-tRNAGln amidotransferase C subunit"/>
    <property type="match status" value="1"/>
</dbReference>
<sequence>MALTLTDVKRIAHLARLELADADAEHTLVQLNDFFGLVEQMQAVDTSGIAPLAHPIEQIEDVALRLRNDVVTETVEREAFQRPAPAVQDGLYLVPKVIE</sequence>